<dbReference type="EC" id="1.1.1.17"/>
<dbReference type="EMBL" id="CH408032">
    <property type="protein sequence ID" value="EAQ87440.1"/>
    <property type="molecule type" value="Genomic_DNA"/>
</dbReference>
<dbReference type="RefSeq" id="XP_001223273.1">
    <property type="nucleotide sequence ID" value="XM_001223272.1"/>
</dbReference>
<dbReference type="SMR" id="Q2H2D7"/>
<dbReference type="STRING" id="306901.Q2H2D7"/>
<dbReference type="GeneID" id="4392871"/>
<dbReference type="VEuPathDB" id="FungiDB:CHGG_04059"/>
<dbReference type="eggNOG" id="ENOG502QVPN">
    <property type="taxonomic scope" value="Eukaryota"/>
</dbReference>
<dbReference type="HOGENOM" id="CLU_036089_0_1_1"/>
<dbReference type="InParanoid" id="Q2H2D7"/>
<dbReference type="OMA" id="APFIERK"/>
<dbReference type="OrthoDB" id="418169at2759"/>
<dbReference type="Proteomes" id="UP000001056">
    <property type="component" value="Unassembled WGS sequence"/>
</dbReference>
<dbReference type="GO" id="GO:0005829">
    <property type="term" value="C:cytosol"/>
    <property type="evidence" value="ECO:0007669"/>
    <property type="project" value="TreeGrafter"/>
</dbReference>
<dbReference type="GO" id="GO:0008926">
    <property type="term" value="F:mannitol-1-phosphate 5-dehydrogenase activity"/>
    <property type="evidence" value="ECO:0007669"/>
    <property type="project" value="UniProtKB-EC"/>
</dbReference>
<dbReference type="GO" id="GO:0019592">
    <property type="term" value="P:mannitol catabolic process"/>
    <property type="evidence" value="ECO:0007669"/>
    <property type="project" value="TreeGrafter"/>
</dbReference>
<dbReference type="Gene3D" id="1.10.1040.10">
    <property type="entry name" value="N-(1-d-carboxylethyl)-l-norvaline Dehydrogenase, domain 2"/>
    <property type="match status" value="1"/>
</dbReference>
<dbReference type="Gene3D" id="3.40.50.720">
    <property type="entry name" value="NAD(P)-binding Rossmann-like Domain"/>
    <property type="match status" value="1"/>
</dbReference>
<dbReference type="HAMAP" id="MF_00196">
    <property type="entry name" value="Mannitol_dehydrog"/>
    <property type="match status" value="1"/>
</dbReference>
<dbReference type="InterPro" id="IPR008927">
    <property type="entry name" value="6-PGluconate_DH-like_C_sf"/>
</dbReference>
<dbReference type="InterPro" id="IPR013328">
    <property type="entry name" value="6PGD_dom2"/>
</dbReference>
<dbReference type="InterPro" id="IPR023028">
    <property type="entry name" value="Mannitol_1_phos_5_DH"/>
</dbReference>
<dbReference type="InterPro" id="IPR000669">
    <property type="entry name" value="Mannitol_DH"/>
</dbReference>
<dbReference type="InterPro" id="IPR013118">
    <property type="entry name" value="Mannitol_DH_C"/>
</dbReference>
<dbReference type="InterPro" id="IPR013131">
    <property type="entry name" value="Mannitol_DH_N"/>
</dbReference>
<dbReference type="InterPro" id="IPR036291">
    <property type="entry name" value="NAD(P)-bd_dom_sf"/>
</dbReference>
<dbReference type="NCBIfam" id="NF002652">
    <property type="entry name" value="PRK02318.2-5"/>
    <property type="match status" value="1"/>
</dbReference>
<dbReference type="PANTHER" id="PTHR30524:SF0">
    <property type="entry name" value="ALTRONATE OXIDOREDUCTASE-RELATED"/>
    <property type="match status" value="1"/>
</dbReference>
<dbReference type="PANTHER" id="PTHR30524">
    <property type="entry name" value="MANNITOL-1-PHOSPHATE 5-DEHYDROGENASE"/>
    <property type="match status" value="1"/>
</dbReference>
<dbReference type="Pfam" id="PF01232">
    <property type="entry name" value="Mannitol_dh"/>
    <property type="match status" value="1"/>
</dbReference>
<dbReference type="Pfam" id="PF08125">
    <property type="entry name" value="Mannitol_dh_C"/>
    <property type="match status" value="1"/>
</dbReference>
<dbReference type="PRINTS" id="PR00084">
    <property type="entry name" value="MTLDHDRGNASE"/>
</dbReference>
<dbReference type="SUPFAM" id="SSF48179">
    <property type="entry name" value="6-phosphogluconate dehydrogenase C-terminal domain-like"/>
    <property type="match status" value="1"/>
</dbReference>
<dbReference type="SUPFAM" id="SSF51735">
    <property type="entry name" value="NAD(P)-binding Rossmann-fold domains"/>
    <property type="match status" value="1"/>
</dbReference>
<accession>Q2H2D7</accession>
<reference key="1">
    <citation type="journal article" date="2015" name="Genome Announc.">
        <title>Draft genome sequence of the cellulolytic fungus Chaetomium globosum.</title>
        <authorList>
            <person name="Cuomo C.A."/>
            <person name="Untereiner W.A."/>
            <person name="Ma L.-J."/>
            <person name="Grabherr M."/>
            <person name="Birren B.W."/>
        </authorList>
    </citation>
    <scope>NUCLEOTIDE SEQUENCE [LARGE SCALE GENOMIC DNA]</scope>
    <source>
        <strain>ATCC 6205 / CBS 148.51 / DSM 1962 / NBRC 6347 / NRRL 1970</strain>
    </source>
</reference>
<protein>
    <recommendedName>
        <fullName>Mannitol-1-phosphate 5-dehydrogenase</fullName>
        <shortName>M1PDH</shortName>
        <shortName>MPD</shortName>
        <shortName>MPDH</shortName>
        <ecNumber>1.1.1.17</ecNumber>
    </recommendedName>
</protein>
<name>MTLD_CHAGB</name>
<evidence type="ECO:0000250" key="1"/>
<evidence type="ECO:0000305" key="2"/>
<gene>
    <name type="ORF">CHGG_04059</name>
</gene>
<keyword id="KW-0520">NAD</keyword>
<keyword id="KW-0560">Oxidoreductase</keyword>
<keyword id="KW-1185">Reference proteome</keyword>
<organism>
    <name type="scientific">Chaetomium globosum (strain ATCC 6205 / CBS 148.51 / DSM 1962 / NBRC 6347 / NRRL 1970)</name>
    <name type="common">Soil fungus</name>
    <dbReference type="NCBI Taxonomy" id="306901"/>
    <lineage>
        <taxon>Eukaryota</taxon>
        <taxon>Fungi</taxon>
        <taxon>Dikarya</taxon>
        <taxon>Ascomycota</taxon>
        <taxon>Pezizomycotina</taxon>
        <taxon>Sordariomycetes</taxon>
        <taxon>Sordariomycetidae</taxon>
        <taxon>Sordariales</taxon>
        <taxon>Chaetomiaceae</taxon>
        <taxon>Chaetomium</taxon>
    </lineage>
</organism>
<proteinExistence type="inferred from homology"/>
<comment type="function">
    <text evidence="1">Catalyzes the NAD(H)-dependent interconversion of D-fructose 6-phosphate and D-mannitol 1-phosphate in the mannitol metabolic pathway.</text>
</comment>
<comment type="catalytic activity">
    <reaction>
        <text>D-mannitol 1-phosphate + NAD(+) = beta-D-fructose 6-phosphate + NADH + H(+)</text>
        <dbReference type="Rhea" id="RHEA:19661"/>
        <dbReference type="ChEBI" id="CHEBI:15378"/>
        <dbReference type="ChEBI" id="CHEBI:57540"/>
        <dbReference type="ChEBI" id="CHEBI:57634"/>
        <dbReference type="ChEBI" id="CHEBI:57945"/>
        <dbReference type="ChEBI" id="CHEBI:61381"/>
        <dbReference type="EC" id="1.1.1.17"/>
    </reaction>
</comment>
<comment type="subunit">
    <text evidence="1">Monomer.</text>
</comment>
<comment type="similarity">
    <text evidence="2">Belongs to the mannitol dehydrogenase family.</text>
</comment>
<sequence length="398" mass="44047">MVQRNAPKKAVHFGAGNIGRGFVACFLHNSGYEVIFAEVNDTTVQKLNSQKSYKVIEVGADGTSESTITNYRAINSRLNEAELVQEIATADLVTCSVGPHILKFLAPVIAKGIDARSTDLTPVAVIACENAIGATDTLAEFIKAPENTNPDRLADYDKRARFANSAIDRIVPAQDPDAGLDVRLEKFYEWVVERTPFADHEPPAVEGIHWVDNLQPFIERKLYTVNTGHATAAYHGYIRRKSTVYDALQDREIQEEVKKALANTASLITQKHGIPQDEQQAYVDKIVRRISNPHLEDAVERVGRAPLRKLSRKERFIGPAAELAEHGKDCGALLDAAEMAFRFQNVEGDDESFKLAEIMEQNGPEDVVKQVCGLEPKEKLFPAVVDVVKRVQADTQSD</sequence>
<feature type="chain" id="PRO_0000371525" description="Mannitol-1-phosphate 5-dehydrogenase">
    <location>
        <begin position="1"/>
        <end position="398"/>
    </location>
</feature>
<feature type="active site" evidence="1">
    <location>
        <position position="221"/>
    </location>
</feature>
<feature type="binding site" evidence="1">
    <location>
        <begin position="10"/>
        <end position="21"/>
    </location>
    <ligand>
        <name>NAD(+)</name>
        <dbReference type="ChEBI" id="CHEBI:57540"/>
    </ligand>
</feature>